<protein>
    <recommendedName>
        <fullName evidence="1">UPF0235 protein AF_2072</fullName>
    </recommendedName>
</protein>
<accession>O28207</accession>
<evidence type="ECO:0000255" key="1">
    <source>
        <dbReference type="HAMAP-Rule" id="MF_00634"/>
    </source>
</evidence>
<proteinExistence type="inferred from homology"/>
<sequence>MREAKDGVLISVHVSPGSKEVSFSYDEWRRAVEVRIKSPAKEGKANRELLGIFRQIFGEVELVSGEKSRSKVLKGKRE</sequence>
<keyword id="KW-1185">Reference proteome</keyword>
<name>Y2072_ARCFU</name>
<comment type="similarity">
    <text evidence="1">Belongs to the UPF0235 family.</text>
</comment>
<dbReference type="EMBL" id="AE000782">
    <property type="protein sequence ID" value="AAB89177.1"/>
    <property type="molecule type" value="Genomic_DNA"/>
</dbReference>
<dbReference type="PIR" id="G69508">
    <property type="entry name" value="G69508"/>
</dbReference>
<dbReference type="SMR" id="O28207"/>
<dbReference type="STRING" id="224325.AF_2072"/>
<dbReference type="PaxDb" id="224325-AF_2072"/>
<dbReference type="EnsemblBacteria" id="AAB89177">
    <property type="protein sequence ID" value="AAB89177"/>
    <property type="gene ID" value="AF_2072"/>
</dbReference>
<dbReference type="KEGG" id="afu:AF_2072"/>
<dbReference type="eggNOG" id="arCOG04058">
    <property type="taxonomic scope" value="Archaea"/>
</dbReference>
<dbReference type="HOGENOM" id="CLU_130694_6_1_2"/>
<dbReference type="OrthoDB" id="51554at2157"/>
<dbReference type="PhylomeDB" id="O28207"/>
<dbReference type="Proteomes" id="UP000002199">
    <property type="component" value="Chromosome"/>
</dbReference>
<dbReference type="GO" id="GO:0005737">
    <property type="term" value="C:cytoplasm"/>
    <property type="evidence" value="ECO:0007669"/>
    <property type="project" value="TreeGrafter"/>
</dbReference>
<dbReference type="Gene3D" id="3.30.1200.10">
    <property type="entry name" value="YggU-like"/>
    <property type="match status" value="1"/>
</dbReference>
<dbReference type="HAMAP" id="MF_00634">
    <property type="entry name" value="UPF0235"/>
    <property type="match status" value="1"/>
</dbReference>
<dbReference type="InterPro" id="IPR003746">
    <property type="entry name" value="DUF167"/>
</dbReference>
<dbReference type="InterPro" id="IPR036591">
    <property type="entry name" value="YggU-like_sf"/>
</dbReference>
<dbReference type="NCBIfam" id="TIGR00251">
    <property type="entry name" value="DUF167 family protein"/>
    <property type="match status" value="1"/>
</dbReference>
<dbReference type="PANTHER" id="PTHR13420">
    <property type="entry name" value="UPF0235 PROTEIN C15ORF40"/>
    <property type="match status" value="1"/>
</dbReference>
<dbReference type="PANTHER" id="PTHR13420:SF7">
    <property type="entry name" value="UPF0235 PROTEIN C15ORF40"/>
    <property type="match status" value="1"/>
</dbReference>
<dbReference type="Pfam" id="PF02594">
    <property type="entry name" value="DUF167"/>
    <property type="match status" value="1"/>
</dbReference>
<dbReference type="SMART" id="SM01152">
    <property type="entry name" value="DUF167"/>
    <property type="match status" value="1"/>
</dbReference>
<dbReference type="SUPFAM" id="SSF69786">
    <property type="entry name" value="YggU-like"/>
    <property type="match status" value="1"/>
</dbReference>
<reference key="1">
    <citation type="journal article" date="1997" name="Nature">
        <title>The complete genome sequence of the hyperthermophilic, sulphate-reducing archaeon Archaeoglobus fulgidus.</title>
        <authorList>
            <person name="Klenk H.-P."/>
            <person name="Clayton R.A."/>
            <person name="Tomb J.-F."/>
            <person name="White O."/>
            <person name="Nelson K.E."/>
            <person name="Ketchum K.A."/>
            <person name="Dodson R.J."/>
            <person name="Gwinn M.L."/>
            <person name="Hickey E.K."/>
            <person name="Peterson J.D."/>
            <person name="Richardson D.L."/>
            <person name="Kerlavage A.R."/>
            <person name="Graham D.E."/>
            <person name="Kyrpides N.C."/>
            <person name="Fleischmann R.D."/>
            <person name="Quackenbush J."/>
            <person name="Lee N.H."/>
            <person name="Sutton G.G."/>
            <person name="Gill S.R."/>
            <person name="Kirkness E.F."/>
            <person name="Dougherty B.A."/>
            <person name="McKenney K."/>
            <person name="Adams M.D."/>
            <person name="Loftus B.J."/>
            <person name="Peterson S.N."/>
            <person name="Reich C.I."/>
            <person name="McNeil L.K."/>
            <person name="Badger J.H."/>
            <person name="Glodek A."/>
            <person name="Zhou L."/>
            <person name="Overbeek R."/>
            <person name="Gocayne J.D."/>
            <person name="Weidman J.F."/>
            <person name="McDonald L.A."/>
            <person name="Utterback T.R."/>
            <person name="Cotton M.D."/>
            <person name="Spriggs T."/>
            <person name="Artiach P."/>
            <person name="Kaine B.P."/>
            <person name="Sykes S.M."/>
            <person name="Sadow P.W."/>
            <person name="D'Andrea K.P."/>
            <person name="Bowman C."/>
            <person name="Fujii C."/>
            <person name="Garland S.A."/>
            <person name="Mason T.M."/>
            <person name="Olsen G.J."/>
            <person name="Fraser C.M."/>
            <person name="Smith H.O."/>
            <person name="Woese C.R."/>
            <person name="Venter J.C."/>
        </authorList>
    </citation>
    <scope>NUCLEOTIDE SEQUENCE [LARGE SCALE GENOMIC DNA]</scope>
    <source>
        <strain>ATCC 49558 / DSM 4304 / JCM 9628 / NBRC 100126 / VC-16</strain>
    </source>
</reference>
<feature type="chain" id="PRO_0000139466" description="UPF0235 protein AF_2072">
    <location>
        <begin position="1"/>
        <end position="78"/>
    </location>
</feature>
<organism>
    <name type="scientific">Archaeoglobus fulgidus (strain ATCC 49558 / DSM 4304 / JCM 9628 / NBRC 100126 / VC-16)</name>
    <dbReference type="NCBI Taxonomy" id="224325"/>
    <lineage>
        <taxon>Archaea</taxon>
        <taxon>Methanobacteriati</taxon>
        <taxon>Methanobacteriota</taxon>
        <taxon>Archaeoglobi</taxon>
        <taxon>Archaeoglobales</taxon>
        <taxon>Archaeoglobaceae</taxon>
        <taxon>Archaeoglobus</taxon>
    </lineage>
</organism>
<gene>
    <name type="ordered locus">AF_2072</name>
</gene>